<evidence type="ECO:0000250" key="1">
    <source>
        <dbReference type="UniProtKB" id="P03971"/>
    </source>
</evidence>
<evidence type="ECO:0000255" key="2"/>
<evidence type="ECO:0000269" key="3">
    <source>
    </source>
</evidence>
<evidence type="ECO:0000269" key="4">
    <source>
    </source>
</evidence>
<evidence type="ECO:0000269" key="5">
    <source>
    </source>
</evidence>
<evidence type="ECO:0000269" key="6">
    <source>
    </source>
</evidence>
<evidence type="ECO:0000269" key="7">
    <source>
    </source>
</evidence>
<evidence type="ECO:0000305" key="8"/>
<gene>
    <name type="primary">Amh</name>
</gene>
<sequence length="554" mass="59244">MQGPHLSPLVLLLATMGAVLQPEAVENLATNTRGLIFLEDELWPPSSPPEPLCLVTVRGEGNTSRASLRVVGGLNSYEYAFLEAVQESRWGPQDLATFGVCSTDSQATLPALQRLGAWLGETGEQQLLVLHLAEVIWEPELLLKFQEPPPGGASRWEQALLVLYPGPGPQVTVTGTGLRGTQNLCPTRDTRYLVLTVDFPAGAWSGSGLILTLQPSREGATLSIDQLQAFLFGSDSRCFTRMTPTLVVLPPAEPSPQPAHGQLDTMPFPQPGLSLEPEALPHSADPFLETLTRLVRALRGPLTQASNTQLALDPGALASFPQGLVNLSDPAALGRLLDWEEPLLLLLSPAAATEREPMPLHGPASAPWAAGLQRRVAVELQAAASELRDLPGLPPTAPPLLARLLALCPNDSRSSGDPLRALLLLKALQGLRAEWHGREGRGRTGRSAGTGTDGPCALRELSVDLRAERSVLIPETYQANNCQGACAWPQSDRNPRYGNHVVLLLKMQARGAALGRLPCCVPTAYAGKLLISLSEERISAHHVPNMVATECGCV</sequence>
<feature type="signal peptide" evidence="2">
    <location>
        <begin position="1"/>
        <end position="24"/>
    </location>
</feature>
<feature type="propeptide" id="PRO_0000033748" evidence="1">
    <location>
        <begin position="25"/>
        <end position="446"/>
    </location>
</feature>
<feature type="chain" id="PRO_0000033749" description="Muellerian-inhibiting factor">
    <location>
        <begin position="447"/>
        <end position="554"/>
    </location>
</feature>
<feature type="site" description="Cleavage" evidence="1">
    <location>
        <begin position="446"/>
        <end position="447"/>
    </location>
</feature>
<feature type="glycosylation site" description="N-linked (GlcNAc...) asparagine" evidence="2">
    <location>
        <position position="62"/>
    </location>
</feature>
<feature type="glycosylation site" description="N-linked (GlcNAc...) asparagine" evidence="2">
    <location>
        <position position="326"/>
    </location>
</feature>
<feature type="glycosylation site" description="N-linked (GlcNAc...) asparagine" evidence="2">
    <location>
        <position position="410"/>
    </location>
</feature>
<feature type="disulfide bond" evidence="1">
    <location>
        <begin position="456"/>
        <end position="520"/>
    </location>
</feature>
<feature type="disulfide bond" evidence="1">
    <location>
        <begin position="482"/>
        <end position="551"/>
    </location>
</feature>
<feature type="disulfide bond" evidence="1">
    <location>
        <begin position="486"/>
        <end position="553"/>
    </location>
</feature>
<feature type="disulfide bond" description="Interchain" evidence="1">
    <location>
        <position position="519"/>
    </location>
</feature>
<feature type="sequence conflict" description="In Ref. 1; CAA44912 and 2; CAC10450." ref="1 2">
    <original>C</original>
    <variation>S</variation>
    <location>
        <position position="101"/>
    </location>
</feature>
<feature type="sequence conflict" description="In Ref. 1; CAA44912 and 2; CAC10450." ref="1 2">
    <original>P</original>
    <variation>S</variation>
    <location>
        <position position="165"/>
    </location>
</feature>
<feature type="sequence conflict" description="In Ref. 1; CAA44912 and 2; CAC10450." ref="1 2">
    <original>S</original>
    <variation>F</variation>
    <location>
        <position position="207"/>
    </location>
</feature>
<feature type="sequence conflict" description="In Ref. 1; CAA44912 and 2; CAC10450." ref="1 2">
    <original>A</original>
    <variation>T</variation>
    <location>
        <position position="350"/>
    </location>
</feature>
<feature type="sequence conflict" description="In Ref. 1; CAA44912 and 2; CAC10450." ref="1 2">
    <original>MP</original>
    <variation>IR</variation>
    <location>
        <begin position="358"/>
        <end position="359"/>
    </location>
</feature>
<feature type="sequence conflict" description="In Ref. 1; CAA44912 and 2; CAC10450." evidence="8" ref="1 2">
    <original>GRSAGTGT</original>
    <variation>RAQRGDKGQ</variation>
    <location>
        <begin position="445"/>
        <end position="452"/>
    </location>
</feature>
<feature type="sequence conflict" description="In Ref. 1; CAA44912 and 2; CAC10450." ref="1 2">
    <original>A</original>
    <variation>R</variation>
    <location>
        <position position="487"/>
    </location>
</feature>
<feature type="sequence conflict" description="In Ref. 1; CAA44912 and 2; CAC10450." ref="1 2">
    <original>H</original>
    <variation>D</variation>
    <location>
        <position position="541"/>
    </location>
</feature>
<feature type="sequence conflict" description="In Ref. 1; CAA44912 and 2; CAC10450." ref="1 2">
    <original>V</original>
    <variation>R</variation>
    <location>
        <position position="554"/>
    </location>
</feature>
<comment type="function">
    <text evidence="1 3 4 5 7">Plays an important role in several reproductive functions, including Muellerian duct regression during male fetal sexua,l differentiation and in the adult plays a role in Leydig cell differentiation and function (PubMed:1782869, PubMed:9435237). In female acts as a negative regulator of the primordial to primary follicle transition and decreases FSH sensitivity of growing follicles (PubMed:11606457, PubMed:11861535). Binds to its sole type II receptor, AMHR2 that recruits type I receptors ACVR1 and BMPR1A which subsequently activates the Smad pathway (By similarity).</text>
</comment>
<comment type="subunit">
    <text evidence="1">Homodimer; disulfide-linked.</text>
</comment>
<comment type="subcellular location">
    <subcellularLocation>
        <location evidence="1">Secreted</location>
    </subcellularLocation>
</comment>
<comment type="tissue specificity">
    <text evidence="5">Expressed in Sertoli cells of fetal testes, and in testes just after birth, but absent in adult testes. In female, AMH is expressed after birth in the granulosa cells of the follicle.</text>
</comment>
<comment type="PTM">
    <text evidence="1">Preproprotein is proteolytically processed to generate N- and C-terminal cleavage products that homodimerize and associate to form a biologically active non-covalent complex. Binding of the non-covalent complex to AMHRII induces dissociation of the pro-region from the mature C-terminal dimer. The N-terminal portion of the protein, despite having no intrinsic activity, has the role of amplifying the activity of the C-terminus.</text>
</comment>
<comment type="disruption phenotype">
    <text evidence="3 6">Homozygous null mutant males have a complete male reproductive tract and functional sperm, but also uterus and oviducts (PubMed:7954809). Most are infertile due to female organs blocking sperm transfer. Females are fertile with enlarged ovaries and atypical follicles (PubMed:7954809). Furthemore in the absence of AMH, follicle growth is more sensitive to stimulation by FSH (PubMed:11606457).</text>
</comment>
<comment type="similarity">
    <text evidence="8">Belongs to the TGF-beta family.</text>
</comment>
<accession>P27106</accession>
<accession>A7E2R1</accession>
<accession>Q5EC55</accession>
<keyword id="KW-0221">Differentiation</keyword>
<keyword id="KW-1015">Disulfide bond</keyword>
<keyword id="KW-0325">Glycoprotein</keyword>
<keyword id="KW-0334">Gonadal differentiation</keyword>
<keyword id="KW-0339">Growth factor</keyword>
<keyword id="KW-1185">Reference proteome</keyword>
<keyword id="KW-0964">Secreted</keyword>
<keyword id="KW-0732">Signal</keyword>
<organism>
    <name type="scientific">Mus musculus</name>
    <name type="common">Mouse</name>
    <dbReference type="NCBI Taxonomy" id="10090"/>
    <lineage>
        <taxon>Eukaryota</taxon>
        <taxon>Metazoa</taxon>
        <taxon>Chordata</taxon>
        <taxon>Craniata</taxon>
        <taxon>Vertebrata</taxon>
        <taxon>Euteleostomi</taxon>
        <taxon>Mammalia</taxon>
        <taxon>Eutheria</taxon>
        <taxon>Euarchontoglires</taxon>
        <taxon>Glires</taxon>
        <taxon>Rodentia</taxon>
        <taxon>Myomorpha</taxon>
        <taxon>Muroidea</taxon>
        <taxon>Muridae</taxon>
        <taxon>Murinae</taxon>
        <taxon>Mus</taxon>
        <taxon>Mus</taxon>
    </lineage>
</organism>
<reference key="1">
    <citation type="journal article" date="1991" name="Development">
        <title>Expression of the mouse anti-Mullerian hormone gene suggests a role in both male and female sexual differentiation.</title>
        <authorList>
            <person name="Muensterberg A."/>
            <person name="Lovell-Badge R."/>
        </authorList>
    </citation>
    <scope>NUCLEOTIDE SEQUENCE [GENOMIC DNA]</scope>
    <scope>TISSUE SPECIFICITY</scope>
    <source>
        <strain>129</strain>
        <tissue>Testis</tissue>
    </source>
</reference>
<reference key="2">
    <citation type="submission" date="2000-09" db="EMBL/GenBank/DDBJ databases">
        <title>A GNRP-like gene shares a bidirectional promoter with SAP62 immediately upstream of AMH.</title>
        <authorList>
            <person name="Dresser D.W."/>
            <person name="Jamin S."/>
            <person name="Atkins C.J."/>
            <person name="Guerrier D."/>
        </authorList>
    </citation>
    <scope>NUCLEOTIDE SEQUENCE [GENOMIC DNA]</scope>
    <source>
        <strain>129</strain>
    </source>
</reference>
<reference key="3">
    <citation type="submission" date="2005-01" db="EMBL/GenBank/DDBJ databases">
        <title>Immunogenicity of anti-Mullerian hormone.</title>
        <authorList>
            <person name="Johnson J.M."/>
            <person name="Altuntas C.Z."/>
            <person name="Tuohy V.K."/>
        </authorList>
    </citation>
    <scope>NUCLEOTIDE SEQUENCE [MRNA]</scope>
</reference>
<reference key="4">
    <citation type="journal article" date="1995" name="Hum. Mol. Genet.">
        <title>The genes for a spliceosome protein (SAP62) and the anti-Mullerian hormone (AMH) are contiguous.</title>
        <authorList>
            <person name="Dresser D.W."/>
            <person name="Hacker A."/>
            <person name="Lovell-Badge R."/>
            <person name="Guerrier D."/>
        </authorList>
    </citation>
    <scope>NUCLEOTIDE SEQUENCE [GENOMIC DNA] OF 1-42</scope>
    <source>
        <strain>129</strain>
    </source>
</reference>
<reference key="5">
    <citation type="journal article" date="2009" name="PLoS Biol.">
        <title>Lineage-specific biology revealed by a finished genome assembly of the mouse.</title>
        <authorList>
            <person name="Church D.M."/>
            <person name="Goodstadt L."/>
            <person name="Hillier L.W."/>
            <person name="Zody M.C."/>
            <person name="Goldstein S."/>
            <person name="She X."/>
            <person name="Bult C.J."/>
            <person name="Agarwala R."/>
            <person name="Cherry J.L."/>
            <person name="DiCuccio M."/>
            <person name="Hlavina W."/>
            <person name="Kapustin Y."/>
            <person name="Meric P."/>
            <person name="Maglott D."/>
            <person name="Birtle Z."/>
            <person name="Marques A.C."/>
            <person name="Graves T."/>
            <person name="Zhou S."/>
            <person name="Teague B."/>
            <person name="Potamousis K."/>
            <person name="Churas C."/>
            <person name="Place M."/>
            <person name="Herschleb J."/>
            <person name="Runnheim R."/>
            <person name="Forrest D."/>
            <person name="Amos-Landgraf J."/>
            <person name="Schwartz D.C."/>
            <person name="Cheng Z."/>
            <person name="Lindblad-Toh K."/>
            <person name="Eichler E.E."/>
            <person name="Ponting C.P."/>
        </authorList>
    </citation>
    <scope>NUCLEOTIDE SEQUENCE [LARGE SCALE GENOMIC DNA]</scope>
    <source>
        <strain>C57BL/6J</strain>
    </source>
</reference>
<reference key="6">
    <citation type="journal article" date="2004" name="Genome Res.">
        <title>The status, quality, and expansion of the NIH full-length cDNA project: the Mammalian Gene Collection (MGC).</title>
        <authorList>
            <consortium name="The MGC Project Team"/>
        </authorList>
    </citation>
    <scope>NUCLEOTIDE SEQUENCE [LARGE SCALE MRNA]</scope>
</reference>
<reference key="7">
    <citation type="journal article" date="1994" name="Cell">
        <title>Muellerian-inhibiting substance function during mammalian sexual development.</title>
        <authorList>
            <person name="Behringer R.R."/>
            <person name="Finegold M.J."/>
            <person name="Cate R.L."/>
        </authorList>
    </citation>
    <scope>DISRUPTION PHENOTYPE</scope>
    <scope>FUNCTION</scope>
</reference>
<reference key="8">
    <citation type="journal article" date="1998" name="Proc. Natl. Acad. Sci. U.S.A.">
        <title>Receptors for anti-muellerian hormone on Leydig cells are responsible for its effects on steroidogenesis and cell differentiation.</title>
        <authorList>
            <person name="Racine C."/>
            <person name="Rey R."/>
            <person name="Forest M.G."/>
            <person name="Louis F."/>
            <person name="Ferre A."/>
            <person name="Huhtaniemi I."/>
            <person name="Josso N."/>
            <person name="di Clemente N."/>
        </authorList>
    </citation>
    <scope>FUNCTION</scope>
</reference>
<reference key="9">
    <citation type="journal article" date="2001" name="Endocrinology">
        <title>Anti-Muellerian hormone attenuates the effects of FSH on follicle development in the mouse ovary.</title>
        <authorList>
            <person name="Durlinger A.L."/>
            <person name="Gruijters M.J."/>
            <person name="Kramer P."/>
            <person name="Karels B."/>
            <person name="Kumar T.R."/>
            <person name="Matzuk M.M."/>
            <person name="Rose U.M."/>
            <person name="de Jong F.H."/>
            <person name="Uilenbroek J.T."/>
            <person name="Grootegoed J.A."/>
            <person name="Themmen A.P."/>
        </authorList>
    </citation>
    <scope>FUNCTION</scope>
</reference>
<reference key="10">
    <citation type="journal article" date="2002" name="Endocrinology">
        <title>Anti-Muellerian hormone inhibits initiation of primordial follicle growth in the mouse ovary.</title>
        <authorList>
            <person name="Durlinger A.L."/>
            <person name="Gruijters M.J."/>
            <person name="Kramer P."/>
            <person name="Karels B."/>
            <person name="Ingraham H.A."/>
            <person name="Nachtigal M.W."/>
            <person name="Uilenbroek J.T."/>
            <person name="Grootegoed J.A."/>
            <person name="Themmen A.P."/>
        </authorList>
    </citation>
    <scope>FUNCTION</scope>
</reference>
<dbReference type="EMBL" id="X63240">
    <property type="protein sequence ID" value="CAA44912.1"/>
    <property type="molecule type" value="Genomic_DNA"/>
</dbReference>
<dbReference type="EMBL" id="X83733">
    <property type="protein sequence ID" value="CAC10450.1"/>
    <property type="molecule type" value="Genomic_DNA"/>
</dbReference>
<dbReference type="EMBL" id="AY911505">
    <property type="protein sequence ID" value="AAW84293.1"/>
    <property type="molecule type" value="mRNA"/>
</dbReference>
<dbReference type="EMBL" id="GL456156">
    <property type="status" value="NOT_ANNOTATED_CDS"/>
    <property type="molecule type" value="Genomic_DNA"/>
</dbReference>
<dbReference type="EMBL" id="BC150477">
    <property type="protein sequence ID" value="AAI50478.1"/>
    <property type="molecule type" value="mRNA"/>
</dbReference>
<dbReference type="PIR" id="S20100">
    <property type="entry name" value="S20100"/>
</dbReference>
<dbReference type="RefSeq" id="NP_031471.2">
    <property type="nucleotide sequence ID" value="NM_007445.2"/>
</dbReference>
<dbReference type="SMR" id="P27106"/>
<dbReference type="CORUM" id="P27106"/>
<dbReference type="FunCoup" id="P27106">
    <property type="interactions" value="825"/>
</dbReference>
<dbReference type="STRING" id="10090.ENSMUSP00000043153"/>
<dbReference type="GlyCosmos" id="P27106">
    <property type="glycosylation" value="3 sites, No reported glycans"/>
</dbReference>
<dbReference type="GlyGen" id="P27106">
    <property type="glycosylation" value="4 sites, 1 O-linked glycan (1 site)"/>
</dbReference>
<dbReference type="iPTMnet" id="P27106"/>
<dbReference type="PhosphoSitePlus" id="P27106"/>
<dbReference type="PaxDb" id="10090-ENSMUSP00000043153"/>
<dbReference type="ProteomicsDB" id="290084"/>
<dbReference type="ProteomicsDB" id="332474"/>
<dbReference type="Antibodypedia" id="22968">
    <property type="antibodies" value="616 antibodies from 35 providers"/>
</dbReference>
<dbReference type="DNASU" id="11705"/>
<dbReference type="GeneID" id="11705"/>
<dbReference type="KEGG" id="mmu:11705"/>
<dbReference type="UCSC" id="uc007get.1">
    <property type="organism name" value="mouse"/>
</dbReference>
<dbReference type="AGR" id="MGI:88006"/>
<dbReference type="CTD" id="268"/>
<dbReference type="MGI" id="MGI:88006">
    <property type="gene designation" value="Amh"/>
</dbReference>
<dbReference type="VEuPathDB" id="HostDB:ENSMUSG00000035262"/>
<dbReference type="eggNOG" id="KOG3900">
    <property type="taxonomic scope" value="Eukaryota"/>
</dbReference>
<dbReference type="HOGENOM" id="CLU_025681_1_0_1"/>
<dbReference type="InParanoid" id="P27106"/>
<dbReference type="OrthoDB" id="9893739at2759"/>
<dbReference type="PhylomeDB" id="P27106"/>
<dbReference type="TreeFam" id="TF335595"/>
<dbReference type="Reactome" id="R-MMU-201451">
    <property type="pathway name" value="Signaling by BMP"/>
</dbReference>
<dbReference type="BioGRID-ORCS" id="11705">
    <property type="hits" value="2 hits in 78 CRISPR screens"/>
</dbReference>
<dbReference type="PRO" id="PR:P27106"/>
<dbReference type="Proteomes" id="UP000000589">
    <property type="component" value="Chromosome 10"/>
</dbReference>
<dbReference type="RNAct" id="P27106">
    <property type="molecule type" value="protein"/>
</dbReference>
<dbReference type="Bgee" id="ENSMUSG00000035262">
    <property type="expression patterns" value="Expressed in seminiferous tubule epithelium and 31 other cell types or tissues"/>
</dbReference>
<dbReference type="GO" id="GO:0005737">
    <property type="term" value="C:cytoplasm"/>
    <property type="evidence" value="ECO:0000314"/>
    <property type="project" value="MGI"/>
</dbReference>
<dbReference type="GO" id="GO:0005576">
    <property type="term" value="C:extracellular region"/>
    <property type="evidence" value="ECO:0000304"/>
    <property type="project" value="Reactome"/>
</dbReference>
<dbReference type="GO" id="GO:0005615">
    <property type="term" value="C:extracellular space"/>
    <property type="evidence" value="ECO:0000250"/>
    <property type="project" value="UniProtKB"/>
</dbReference>
<dbReference type="GO" id="GO:0008083">
    <property type="term" value="F:growth factor activity"/>
    <property type="evidence" value="ECO:0007669"/>
    <property type="project" value="UniProtKB-KW"/>
</dbReference>
<dbReference type="GO" id="GO:0005160">
    <property type="term" value="F:transforming growth factor beta receptor binding"/>
    <property type="evidence" value="ECO:0000266"/>
    <property type="project" value="MGI"/>
</dbReference>
<dbReference type="GO" id="GO:0005114">
    <property type="term" value="F:type II transforming growth factor beta receptor binding"/>
    <property type="evidence" value="ECO:0000250"/>
    <property type="project" value="UniProtKB"/>
</dbReference>
<dbReference type="GO" id="GO:1990262">
    <property type="term" value="P:anti-Mullerian hormone receptor signaling pathway"/>
    <property type="evidence" value="ECO:0000250"/>
    <property type="project" value="UniProtKB"/>
</dbReference>
<dbReference type="GO" id="GO:0007506">
    <property type="term" value="P:gonadal mesoderm development"/>
    <property type="evidence" value="ECO:0007669"/>
    <property type="project" value="UniProtKB-KW"/>
</dbReference>
<dbReference type="GO" id="GO:0033327">
    <property type="term" value="P:Leydig cell differentiation"/>
    <property type="evidence" value="ECO:0000315"/>
    <property type="project" value="UniProtKB"/>
</dbReference>
<dbReference type="GO" id="GO:0001880">
    <property type="term" value="P:Mullerian duct regression"/>
    <property type="evidence" value="ECO:0000250"/>
    <property type="project" value="UniProtKB"/>
</dbReference>
<dbReference type="GO" id="GO:2000355">
    <property type="term" value="P:negative regulation of ovarian follicle development"/>
    <property type="evidence" value="ECO:0000315"/>
    <property type="project" value="UniProtKB"/>
</dbReference>
<dbReference type="GO" id="GO:0001541">
    <property type="term" value="P:ovarian follicle development"/>
    <property type="evidence" value="ECO:0000315"/>
    <property type="project" value="UniProtKB"/>
</dbReference>
<dbReference type="GO" id="GO:0007530">
    <property type="term" value="P:sex determination"/>
    <property type="evidence" value="ECO:0000315"/>
    <property type="project" value="UniProtKB"/>
</dbReference>
<dbReference type="GO" id="GO:0001655">
    <property type="term" value="P:urogenital system development"/>
    <property type="evidence" value="ECO:0000266"/>
    <property type="project" value="MGI"/>
</dbReference>
<dbReference type="CDD" id="cd13757">
    <property type="entry name" value="TGF_beta_AMH"/>
    <property type="match status" value="1"/>
</dbReference>
<dbReference type="FunFam" id="2.10.90.10:FF:000033">
    <property type="entry name" value="Muellerian-inhibiting factor"/>
    <property type="match status" value="1"/>
</dbReference>
<dbReference type="Gene3D" id="2.10.90.10">
    <property type="entry name" value="Cystine-knot cytokines"/>
    <property type="match status" value="1"/>
</dbReference>
<dbReference type="InterPro" id="IPR006799">
    <property type="entry name" value="AMH_N"/>
</dbReference>
<dbReference type="InterPro" id="IPR029034">
    <property type="entry name" value="Cystine-knot_cytokine"/>
</dbReference>
<dbReference type="InterPro" id="IPR021203">
    <property type="entry name" value="Muellerian-inhibiting_factor"/>
</dbReference>
<dbReference type="InterPro" id="IPR001839">
    <property type="entry name" value="TGF-b_C"/>
</dbReference>
<dbReference type="InterPro" id="IPR017948">
    <property type="entry name" value="TGFb_CS"/>
</dbReference>
<dbReference type="PANTHER" id="PTHR15009">
    <property type="entry name" value="MUELLERIAN-INHIBITING FACTOR"/>
    <property type="match status" value="1"/>
</dbReference>
<dbReference type="PANTHER" id="PTHR15009:SF4">
    <property type="entry name" value="MUELLERIAN-INHIBITING FACTOR"/>
    <property type="match status" value="1"/>
</dbReference>
<dbReference type="Pfam" id="PF04709">
    <property type="entry name" value="AMH_N"/>
    <property type="match status" value="1"/>
</dbReference>
<dbReference type="Pfam" id="PF00019">
    <property type="entry name" value="TGF_beta"/>
    <property type="match status" value="1"/>
</dbReference>
<dbReference type="PIRSF" id="PIRSF037270">
    <property type="entry name" value="Muellerian-inhibiting_factor"/>
    <property type="match status" value="1"/>
</dbReference>
<dbReference type="SMART" id="SM00204">
    <property type="entry name" value="TGFB"/>
    <property type="match status" value="1"/>
</dbReference>
<dbReference type="SUPFAM" id="SSF57501">
    <property type="entry name" value="Cystine-knot cytokines"/>
    <property type="match status" value="1"/>
</dbReference>
<dbReference type="PROSITE" id="PS00250">
    <property type="entry name" value="TGF_BETA_1"/>
    <property type="match status" value="1"/>
</dbReference>
<dbReference type="PROSITE" id="PS51362">
    <property type="entry name" value="TGF_BETA_2"/>
    <property type="match status" value="1"/>
</dbReference>
<proteinExistence type="evidence at transcript level"/>
<protein>
    <recommendedName>
        <fullName>Muellerian-inhibiting factor</fullName>
    </recommendedName>
    <alternativeName>
        <fullName>Anti-Muellerian hormone</fullName>
        <shortName>AMH</shortName>
    </alternativeName>
    <alternativeName>
        <fullName>Muellerian-inhibiting substance</fullName>
        <shortName>MIS</shortName>
    </alternativeName>
</protein>
<name>MIS_MOUSE</name>